<proteinExistence type="evidence at protein level"/>
<comment type="function">
    <text evidence="2">Involved in the biosynthesis of the unique nickel-containing tetrapyrrole coenzyme F430, the prosthetic group of methyl-coenzyme M reductase (MCR), which plays a key role in methanogenesis and anaerobic methane oxidation. Catalyzes the activation the g-propionate side chain of 15,17(3)-seco-F430-17(3)-acid (seco-F430) for intramolecular C-C bond formation to yield the carbocyclic F ring of coenzyme F430.</text>
</comment>
<comment type="catalytic activity">
    <reaction evidence="2">
        <text>15,17(3)-seco-F430-17(3)-acid + ATP = coenzyme F430 + ADP + phosphate</text>
        <dbReference type="Rhea" id="RHEA:52904"/>
        <dbReference type="ChEBI" id="CHEBI:30616"/>
        <dbReference type="ChEBI" id="CHEBI:43474"/>
        <dbReference type="ChEBI" id="CHEBI:60540"/>
        <dbReference type="ChEBI" id="CHEBI:136888"/>
        <dbReference type="ChEBI" id="CHEBI:456216"/>
        <dbReference type="EC" id="6.4.1.9"/>
    </reaction>
</comment>
<comment type="similarity">
    <text evidence="4">Belongs to the MurCDEF family.</text>
</comment>
<dbReference type="EC" id="6.4.1.9" evidence="2"/>
<dbReference type="EMBL" id="AE010299">
    <property type="protein sequence ID" value="AAM06985.1"/>
    <property type="molecule type" value="Genomic_DNA"/>
</dbReference>
<dbReference type="RefSeq" id="WP_011023538.1">
    <property type="nucleotide sequence ID" value="NC_003552.1"/>
</dbReference>
<dbReference type="SMR" id="Q8TJZ6"/>
<dbReference type="FunCoup" id="Q8TJZ6">
    <property type="interactions" value="94"/>
</dbReference>
<dbReference type="STRING" id="188937.MA_3630"/>
<dbReference type="EnsemblBacteria" id="AAM06985">
    <property type="protein sequence ID" value="AAM06985"/>
    <property type="gene ID" value="MA_3630"/>
</dbReference>
<dbReference type="GeneID" id="1475523"/>
<dbReference type="KEGG" id="mac:MA_3630"/>
<dbReference type="HOGENOM" id="CLU_047362_0_0_2"/>
<dbReference type="InParanoid" id="Q8TJZ6"/>
<dbReference type="OrthoDB" id="52890at2157"/>
<dbReference type="BioCyc" id="MetaCyc:MONOMER-20117"/>
<dbReference type="Proteomes" id="UP000002487">
    <property type="component" value="Chromosome"/>
</dbReference>
<dbReference type="GO" id="GO:0005524">
    <property type="term" value="F:ATP binding"/>
    <property type="evidence" value="ECO:0007669"/>
    <property type="project" value="UniProtKB-KW"/>
</dbReference>
<dbReference type="GO" id="GO:0016874">
    <property type="term" value="F:ligase activity"/>
    <property type="evidence" value="ECO:0007669"/>
    <property type="project" value="UniProtKB-KW"/>
</dbReference>
<dbReference type="GO" id="GO:0015948">
    <property type="term" value="P:methanogenesis"/>
    <property type="evidence" value="ECO:0007669"/>
    <property type="project" value="UniProtKB-KW"/>
</dbReference>
<dbReference type="Gene3D" id="3.40.1190.10">
    <property type="entry name" value="Mur-like, catalytic domain"/>
    <property type="match status" value="1"/>
</dbReference>
<dbReference type="InterPro" id="IPR036565">
    <property type="entry name" value="Mur-like_cat_sf"/>
</dbReference>
<dbReference type="InterPro" id="IPR051046">
    <property type="entry name" value="MurCDEF_CellWall_CoF430Synth"/>
</dbReference>
<dbReference type="NCBIfam" id="NF033197">
    <property type="entry name" value="F430_CfbE"/>
    <property type="match status" value="1"/>
</dbReference>
<dbReference type="PANTHER" id="PTHR43024">
    <property type="entry name" value="UDP-N-ACETYLMURAMOYL-TRIPEPTIDE--D-ALANYL-D-ALANINE LIGASE"/>
    <property type="match status" value="1"/>
</dbReference>
<dbReference type="PANTHER" id="PTHR43024:SF1">
    <property type="entry name" value="UDP-N-ACETYLMURAMOYL-TRIPEPTIDE--D-ALANYL-D-ALANINE LIGASE"/>
    <property type="match status" value="1"/>
</dbReference>
<dbReference type="SUPFAM" id="SSF53623">
    <property type="entry name" value="MurD-like peptide ligases, catalytic domain"/>
    <property type="match status" value="1"/>
</dbReference>
<organism>
    <name type="scientific">Methanosarcina acetivorans (strain ATCC 35395 / DSM 2834 / JCM 12185 / C2A)</name>
    <dbReference type="NCBI Taxonomy" id="188937"/>
    <lineage>
        <taxon>Archaea</taxon>
        <taxon>Methanobacteriati</taxon>
        <taxon>Methanobacteriota</taxon>
        <taxon>Stenosarchaea group</taxon>
        <taxon>Methanomicrobia</taxon>
        <taxon>Methanosarcinales</taxon>
        <taxon>Methanosarcinaceae</taxon>
        <taxon>Methanosarcina</taxon>
    </lineage>
</organism>
<sequence length="472" mass="50407">MDLFRKKLAVLDLTHGGIPIARKLAALGNDVSGVDVYGTVDQALLGELEEKYGIRCSKAPLPVSDFDLLIAPVHLDPAYPMLIKARSEGKTVLSHHEAVGKILQADPRLSEIKIVEITGVKAKTSTASLLADMLSRSFKVVLHTSRGLEAWKAGIPFLIHRGLSITPGSILIAVEKSLEQEIRPEFFIFEISIGATGTADLGILTTLSPDYGIANNTSLASDAKLQLVLNARPGSTLLLNAGAEKALEAAKGSLAKVLTFKDPFCSDSYLKLADAPDFVLETESGAEKNLTLHFLRRGEELFSASLCPGYNSSAYRTAFVAASAAALELGVGLEAIVSVLEEFRGLSGRMQEKELNGVVLVDNSNSGMDILSAEKALEYALLKKKDEKKGNIILILGEEASQVCEGLPPGSVQGFLEKFGTKCRHIILVGERMEAVAAENASYAGSLPEGLQKASELAGTEDIILSSVKCFR</sequence>
<gene>
    <name evidence="3" type="primary">cfbE</name>
    <name evidence="5" type="synonym">murD</name>
    <name evidence="5" type="ordered locus">MA_3630</name>
</gene>
<reference key="1">
    <citation type="journal article" date="2002" name="Genome Res.">
        <title>The genome of Methanosarcina acetivorans reveals extensive metabolic and physiological diversity.</title>
        <authorList>
            <person name="Galagan J.E."/>
            <person name="Nusbaum C."/>
            <person name="Roy A."/>
            <person name="Endrizzi M.G."/>
            <person name="Macdonald P."/>
            <person name="FitzHugh W."/>
            <person name="Calvo S."/>
            <person name="Engels R."/>
            <person name="Smirnov S."/>
            <person name="Atnoor D."/>
            <person name="Brown A."/>
            <person name="Allen N."/>
            <person name="Naylor J."/>
            <person name="Stange-Thomann N."/>
            <person name="DeArellano K."/>
            <person name="Johnson R."/>
            <person name="Linton L."/>
            <person name="McEwan P."/>
            <person name="McKernan K."/>
            <person name="Talamas J."/>
            <person name="Tirrell A."/>
            <person name="Ye W."/>
            <person name="Zimmer A."/>
            <person name="Barber R.D."/>
            <person name="Cann I."/>
            <person name="Graham D.E."/>
            <person name="Grahame D.A."/>
            <person name="Guss A.M."/>
            <person name="Hedderich R."/>
            <person name="Ingram-Smith C."/>
            <person name="Kuettner H.C."/>
            <person name="Krzycki J.A."/>
            <person name="Leigh J.A."/>
            <person name="Li W."/>
            <person name="Liu J."/>
            <person name="Mukhopadhyay B."/>
            <person name="Reeve J.N."/>
            <person name="Smith K."/>
            <person name="Springer T.A."/>
            <person name="Umayam L.A."/>
            <person name="White O."/>
            <person name="White R.H."/>
            <person name="de Macario E.C."/>
            <person name="Ferry J.G."/>
            <person name="Jarrell K.F."/>
            <person name="Jing H."/>
            <person name="Macario A.J.L."/>
            <person name="Paulsen I.T."/>
            <person name="Pritchett M."/>
            <person name="Sowers K.R."/>
            <person name="Swanson R.V."/>
            <person name="Zinder S.H."/>
            <person name="Lander E."/>
            <person name="Metcalf W.W."/>
            <person name="Birren B."/>
        </authorList>
    </citation>
    <scope>NUCLEOTIDE SEQUENCE [LARGE SCALE GENOMIC DNA]</scope>
    <source>
        <strain evidence="6">ATCC 35395 / DSM 2834 / JCM 12185 / C2A</strain>
    </source>
</reference>
<reference key="2">
    <citation type="journal article" date="2016" name="Science">
        <title>The biosynthetic pathway of coenzyme F430 in methanogenic and methanotrophic archaea.</title>
        <authorList>
            <person name="Zheng K."/>
            <person name="Ngo P.D."/>
            <person name="Owens V.L."/>
            <person name="Yang X.P."/>
            <person name="Mansoorabadi S.O."/>
        </authorList>
    </citation>
    <scope>FUNCTION</scope>
    <scope>CATALYTIC ACTIVITY</scope>
    <source>
        <strain>ATCC 35395 / DSM 2834 / JCM 12185 / C2A</strain>
    </source>
</reference>
<name>CFBE_METAC</name>
<evidence type="ECO:0000255" key="1"/>
<evidence type="ECO:0000269" key="2">
    <source>
    </source>
</evidence>
<evidence type="ECO:0000303" key="3">
    <source>
    </source>
</evidence>
<evidence type="ECO:0000305" key="4"/>
<evidence type="ECO:0000312" key="5">
    <source>
        <dbReference type="EMBL" id="AAM06985.1"/>
    </source>
</evidence>
<evidence type="ECO:0000312" key="6">
    <source>
        <dbReference type="Proteomes" id="UP000002487"/>
    </source>
</evidence>
<protein>
    <recommendedName>
        <fullName evidence="3">Coenzyme F(430) synthetase</fullName>
        <ecNumber evidence="2">6.4.1.9</ecNumber>
    </recommendedName>
</protein>
<keyword id="KW-0067">ATP-binding</keyword>
<keyword id="KW-0436">Ligase</keyword>
<keyword id="KW-0484">Methanogenesis</keyword>
<keyword id="KW-0547">Nucleotide-binding</keyword>
<keyword id="KW-1185">Reference proteome</keyword>
<accession>Q8TJZ6</accession>
<feature type="chain" id="PRO_0000442422" description="Coenzyme F(430) synthetase">
    <location>
        <begin position="1"/>
        <end position="472"/>
    </location>
</feature>
<feature type="binding site" evidence="1">
    <location>
        <begin position="119"/>
        <end position="125"/>
    </location>
    <ligand>
        <name>ATP</name>
        <dbReference type="ChEBI" id="CHEBI:30616"/>
    </ligand>
</feature>